<protein>
    <recommendedName>
        <fullName evidence="1">Enolase</fullName>
        <ecNumber evidence="1">4.2.1.11</ecNumber>
    </recommendedName>
    <alternativeName>
        <fullName evidence="1">2-phospho-D-glycerate hydro-lyase</fullName>
    </alternativeName>
    <alternativeName>
        <fullName evidence="1">2-phosphoglycerate dehydratase</fullName>
    </alternativeName>
</protein>
<proteinExistence type="inferred from homology"/>
<evidence type="ECO:0000255" key="1">
    <source>
        <dbReference type="HAMAP-Rule" id="MF_00318"/>
    </source>
</evidence>
<name>ENO_DICT6</name>
<keyword id="KW-0963">Cytoplasm</keyword>
<keyword id="KW-0324">Glycolysis</keyword>
<keyword id="KW-0456">Lyase</keyword>
<keyword id="KW-0460">Magnesium</keyword>
<keyword id="KW-0479">Metal-binding</keyword>
<keyword id="KW-0964">Secreted</keyword>
<gene>
    <name evidence="1" type="primary">eno</name>
    <name type="ordered locus">DICTH_1319</name>
</gene>
<dbReference type="EC" id="4.2.1.11" evidence="1"/>
<dbReference type="EMBL" id="CP001146">
    <property type="protein sequence ID" value="ACI18841.1"/>
    <property type="molecule type" value="Genomic_DNA"/>
</dbReference>
<dbReference type="RefSeq" id="WP_012547473.1">
    <property type="nucleotide sequence ID" value="NC_011297.1"/>
</dbReference>
<dbReference type="SMR" id="B5YF30"/>
<dbReference type="STRING" id="309799.DICTH_1319"/>
<dbReference type="PaxDb" id="309799-DICTH_1319"/>
<dbReference type="KEGG" id="dth:DICTH_1319"/>
<dbReference type="eggNOG" id="COG0148">
    <property type="taxonomic scope" value="Bacteria"/>
</dbReference>
<dbReference type="HOGENOM" id="CLU_031223_2_1_0"/>
<dbReference type="OrthoDB" id="9804716at2"/>
<dbReference type="UniPathway" id="UPA00109">
    <property type="reaction ID" value="UER00187"/>
</dbReference>
<dbReference type="Proteomes" id="UP000001733">
    <property type="component" value="Chromosome"/>
</dbReference>
<dbReference type="GO" id="GO:0009986">
    <property type="term" value="C:cell surface"/>
    <property type="evidence" value="ECO:0007669"/>
    <property type="project" value="UniProtKB-SubCell"/>
</dbReference>
<dbReference type="GO" id="GO:0005576">
    <property type="term" value="C:extracellular region"/>
    <property type="evidence" value="ECO:0007669"/>
    <property type="project" value="UniProtKB-SubCell"/>
</dbReference>
<dbReference type="GO" id="GO:0000015">
    <property type="term" value="C:phosphopyruvate hydratase complex"/>
    <property type="evidence" value="ECO:0007669"/>
    <property type="project" value="InterPro"/>
</dbReference>
<dbReference type="GO" id="GO:0000287">
    <property type="term" value="F:magnesium ion binding"/>
    <property type="evidence" value="ECO:0007669"/>
    <property type="project" value="UniProtKB-UniRule"/>
</dbReference>
<dbReference type="GO" id="GO:0004634">
    <property type="term" value="F:phosphopyruvate hydratase activity"/>
    <property type="evidence" value="ECO:0007669"/>
    <property type="project" value="UniProtKB-UniRule"/>
</dbReference>
<dbReference type="GO" id="GO:0006096">
    <property type="term" value="P:glycolytic process"/>
    <property type="evidence" value="ECO:0007669"/>
    <property type="project" value="UniProtKB-UniRule"/>
</dbReference>
<dbReference type="CDD" id="cd03313">
    <property type="entry name" value="enolase"/>
    <property type="match status" value="1"/>
</dbReference>
<dbReference type="FunFam" id="3.20.20.120:FF:000001">
    <property type="entry name" value="Enolase"/>
    <property type="match status" value="1"/>
</dbReference>
<dbReference type="FunFam" id="3.30.390.10:FF:000001">
    <property type="entry name" value="Enolase"/>
    <property type="match status" value="1"/>
</dbReference>
<dbReference type="Gene3D" id="3.20.20.120">
    <property type="entry name" value="Enolase-like C-terminal domain"/>
    <property type="match status" value="1"/>
</dbReference>
<dbReference type="Gene3D" id="3.30.390.10">
    <property type="entry name" value="Enolase-like, N-terminal domain"/>
    <property type="match status" value="1"/>
</dbReference>
<dbReference type="HAMAP" id="MF_00318">
    <property type="entry name" value="Enolase"/>
    <property type="match status" value="1"/>
</dbReference>
<dbReference type="InterPro" id="IPR000941">
    <property type="entry name" value="Enolase"/>
</dbReference>
<dbReference type="InterPro" id="IPR036849">
    <property type="entry name" value="Enolase-like_C_sf"/>
</dbReference>
<dbReference type="InterPro" id="IPR029017">
    <property type="entry name" value="Enolase-like_N"/>
</dbReference>
<dbReference type="InterPro" id="IPR020810">
    <property type="entry name" value="Enolase_C"/>
</dbReference>
<dbReference type="InterPro" id="IPR020809">
    <property type="entry name" value="Enolase_CS"/>
</dbReference>
<dbReference type="InterPro" id="IPR020811">
    <property type="entry name" value="Enolase_N"/>
</dbReference>
<dbReference type="NCBIfam" id="TIGR01060">
    <property type="entry name" value="eno"/>
    <property type="match status" value="1"/>
</dbReference>
<dbReference type="PANTHER" id="PTHR11902">
    <property type="entry name" value="ENOLASE"/>
    <property type="match status" value="1"/>
</dbReference>
<dbReference type="PANTHER" id="PTHR11902:SF1">
    <property type="entry name" value="ENOLASE"/>
    <property type="match status" value="1"/>
</dbReference>
<dbReference type="Pfam" id="PF00113">
    <property type="entry name" value="Enolase_C"/>
    <property type="match status" value="1"/>
</dbReference>
<dbReference type="Pfam" id="PF03952">
    <property type="entry name" value="Enolase_N"/>
    <property type="match status" value="1"/>
</dbReference>
<dbReference type="PIRSF" id="PIRSF001400">
    <property type="entry name" value="Enolase"/>
    <property type="match status" value="1"/>
</dbReference>
<dbReference type="PRINTS" id="PR00148">
    <property type="entry name" value="ENOLASE"/>
</dbReference>
<dbReference type="SFLD" id="SFLDS00001">
    <property type="entry name" value="Enolase"/>
    <property type="match status" value="1"/>
</dbReference>
<dbReference type="SFLD" id="SFLDF00002">
    <property type="entry name" value="enolase"/>
    <property type="match status" value="1"/>
</dbReference>
<dbReference type="SMART" id="SM01192">
    <property type="entry name" value="Enolase_C"/>
    <property type="match status" value="1"/>
</dbReference>
<dbReference type="SMART" id="SM01193">
    <property type="entry name" value="Enolase_N"/>
    <property type="match status" value="1"/>
</dbReference>
<dbReference type="SUPFAM" id="SSF51604">
    <property type="entry name" value="Enolase C-terminal domain-like"/>
    <property type="match status" value="1"/>
</dbReference>
<dbReference type="SUPFAM" id="SSF54826">
    <property type="entry name" value="Enolase N-terminal domain-like"/>
    <property type="match status" value="1"/>
</dbReference>
<dbReference type="PROSITE" id="PS00164">
    <property type="entry name" value="ENOLASE"/>
    <property type="match status" value="1"/>
</dbReference>
<organism>
    <name type="scientific">Dictyoglomus thermophilum (strain ATCC 35947 / DSM 3960 / H-6-12)</name>
    <dbReference type="NCBI Taxonomy" id="309799"/>
    <lineage>
        <taxon>Bacteria</taxon>
        <taxon>Pseudomonadati</taxon>
        <taxon>Dictyoglomota</taxon>
        <taxon>Dictyoglomia</taxon>
        <taxon>Dictyoglomales</taxon>
        <taxon>Dictyoglomaceae</taxon>
        <taxon>Dictyoglomus</taxon>
    </lineage>
</organism>
<accession>B5YF30</accession>
<comment type="function">
    <text evidence="1">Catalyzes the reversible conversion of 2-phosphoglycerate (2-PG) into phosphoenolpyruvate (PEP). It is essential for the degradation of carbohydrates via glycolysis.</text>
</comment>
<comment type="catalytic activity">
    <reaction evidence="1">
        <text>(2R)-2-phosphoglycerate = phosphoenolpyruvate + H2O</text>
        <dbReference type="Rhea" id="RHEA:10164"/>
        <dbReference type="ChEBI" id="CHEBI:15377"/>
        <dbReference type="ChEBI" id="CHEBI:58289"/>
        <dbReference type="ChEBI" id="CHEBI:58702"/>
        <dbReference type="EC" id="4.2.1.11"/>
    </reaction>
</comment>
<comment type="cofactor">
    <cofactor evidence="1">
        <name>Mg(2+)</name>
        <dbReference type="ChEBI" id="CHEBI:18420"/>
    </cofactor>
    <text evidence="1">Binds a second Mg(2+) ion via substrate during catalysis.</text>
</comment>
<comment type="pathway">
    <text evidence="1">Carbohydrate degradation; glycolysis; pyruvate from D-glyceraldehyde 3-phosphate: step 4/5.</text>
</comment>
<comment type="subcellular location">
    <subcellularLocation>
        <location evidence="1">Cytoplasm</location>
    </subcellularLocation>
    <subcellularLocation>
        <location evidence="1">Secreted</location>
    </subcellularLocation>
    <subcellularLocation>
        <location evidence="1">Cell surface</location>
    </subcellularLocation>
    <text evidence="1">Fractions of enolase are present in both the cytoplasm and on the cell surface.</text>
</comment>
<comment type="similarity">
    <text evidence="1">Belongs to the enolase family.</text>
</comment>
<feature type="chain" id="PRO_1000115858" description="Enolase">
    <location>
        <begin position="1"/>
        <end position="424"/>
    </location>
</feature>
<feature type="active site" description="Proton donor" evidence="1">
    <location>
        <position position="204"/>
    </location>
</feature>
<feature type="active site" description="Proton acceptor" evidence="1">
    <location>
        <position position="336"/>
    </location>
</feature>
<feature type="binding site" evidence="1">
    <location>
        <position position="163"/>
    </location>
    <ligand>
        <name>(2R)-2-phosphoglycerate</name>
        <dbReference type="ChEBI" id="CHEBI:58289"/>
    </ligand>
</feature>
<feature type="binding site" evidence="1">
    <location>
        <position position="241"/>
    </location>
    <ligand>
        <name>Mg(2+)</name>
        <dbReference type="ChEBI" id="CHEBI:18420"/>
    </ligand>
</feature>
<feature type="binding site" evidence="1">
    <location>
        <position position="284"/>
    </location>
    <ligand>
        <name>Mg(2+)</name>
        <dbReference type="ChEBI" id="CHEBI:18420"/>
    </ligand>
</feature>
<feature type="binding site" evidence="1">
    <location>
        <position position="311"/>
    </location>
    <ligand>
        <name>Mg(2+)</name>
        <dbReference type="ChEBI" id="CHEBI:18420"/>
    </ligand>
</feature>
<feature type="binding site" evidence="1">
    <location>
        <position position="336"/>
    </location>
    <ligand>
        <name>(2R)-2-phosphoglycerate</name>
        <dbReference type="ChEBI" id="CHEBI:58289"/>
    </ligand>
</feature>
<feature type="binding site" evidence="1">
    <location>
        <position position="365"/>
    </location>
    <ligand>
        <name>(2R)-2-phosphoglycerate</name>
        <dbReference type="ChEBI" id="CHEBI:58289"/>
    </ligand>
</feature>
<feature type="binding site" evidence="1">
    <location>
        <position position="366"/>
    </location>
    <ligand>
        <name>(2R)-2-phosphoglycerate</name>
        <dbReference type="ChEBI" id="CHEBI:58289"/>
    </ligand>
</feature>
<feature type="binding site" evidence="1">
    <location>
        <position position="387"/>
    </location>
    <ligand>
        <name>(2R)-2-phosphoglycerate</name>
        <dbReference type="ChEBI" id="CHEBI:58289"/>
    </ligand>
</feature>
<reference key="1">
    <citation type="journal article" date="2014" name="Genome Announc.">
        <title>Complete Genome Sequence of the Extreme Thermophile Dictyoglomus thermophilum H-6-12.</title>
        <authorList>
            <person name="Coil D.A."/>
            <person name="Badger J.H."/>
            <person name="Forberger H.C."/>
            <person name="Riggs F."/>
            <person name="Madupu R."/>
            <person name="Fedorova N."/>
            <person name="Ward N."/>
            <person name="Robb F.T."/>
            <person name="Eisen J.A."/>
        </authorList>
    </citation>
    <scope>NUCLEOTIDE SEQUENCE [LARGE SCALE GENOMIC DNA]</scope>
    <source>
        <strain>ATCC 35947 / DSM 3960 / H-6-12</strain>
    </source>
</reference>
<sequence>MPAILDVRGREVLDSRGNPTVEAEVYLEDGSVGRAIVPSGASTGSREALELRDNDPKRYKGKGVLQAVKNINEIIAQELIGLEALDQYTVDKTMIELDGTENKSRLGANAILAVSLATARAAAASLGVPLYLYLGGVQARELPTPLMNVINGGKHADNPLDFQEYMIVPLASTFKESLRWAVEVFHTLKSILKSKGLNTNVGDEGGFAPYLEKNEDPLAILVEAIQKAGFEPGKDVALALDLAASEFYENGKYILKAEGKELTSDEMISFLEYLCDKYPIVSIEDGLSEKDWDGWKKLTDKLGKRVQLVGDDIFVTNPKILAEGIEKGIANAILVKVNQIGSLTETLDTIRIAHQAGYRTVISHRSGETEDTFIADLSVAVNSGQIKTGSLSRTDRIAKYNQLLRIEEELGEAALYRGILNFKR</sequence>